<proteinExistence type="evidence at protein level"/>
<feature type="chain" id="PRO_0000094752" description="Tyrosine-protein phosphatase non-receptor type 2">
    <location>
        <begin position="1"/>
        <end position="415"/>
    </location>
</feature>
<feature type="domain" description="Tyrosine-protein phosphatase" evidence="4">
    <location>
        <begin position="5"/>
        <end position="275"/>
    </location>
</feature>
<feature type="region of interest" description="Endoplasmic reticulum location">
    <location>
        <begin position="346"/>
        <end position="415"/>
    </location>
</feature>
<feature type="region of interest" description="Mediates interaction with STX17" evidence="22">
    <location>
        <begin position="376"/>
        <end position="415"/>
    </location>
</feature>
<feature type="active site" description="Phosphocysteine intermediate" evidence="4 5">
    <location>
        <position position="216"/>
    </location>
</feature>
<feature type="binding site" evidence="1">
    <location>
        <position position="182"/>
    </location>
    <ligand>
        <name>substrate</name>
    </ligand>
</feature>
<feature type="binding site" evidence="1">
    <location>
        <begin position="216"/>
        <end position="222"/>
    </location>
    <ligand>
        <name>substrate</name>
    </ligand>
</feature>
<feature type="binding site" evidence="1">
    <location>
        <position position="260"/>
    </location>
    <ligand>
        <name>substrate</name>
    </ligand>
</feature>
<feature type="modified residue" description="Phosphotyrosine" evidence="2">
    <location>
        <position position="22"/>
    </location>
</feature>
<feature type="modified residue" description="Phosphoserine" evidence="2">
    <location>
        <position position="52"/>
    </location>
</feature>
<feature type="modified residue" description="Phosphotyrosine" evidence="2">
    <location>
        <position position="68"/>
    </location>
</feature>
<feature type="modified residue" description="S-nitrosocysteine" evidence="2">
    <location>
        <position position="216"/>
    </location>
</feature>
<feature type="modified residue" description="Phosphoserine" evidence="33">
    <location>
        <position position="293"/>
    </location>
</feature>
<feature type="modified residue" description="Phosphoserine" evidence="30 33 34">
    <location>
        <position position="298"/>
    </location>
</feature>
<feature type="modified residue" description="Phosphoserine" evidence="30 31 32 33 34">
    <location>
        <position position="304"/>
    </location>
</feature>
<feature type="splice variant" id="VSP_054821" description="In isoform 4." evidence="28">
    <original>N</original>
    <variation>NYIENLWITLYLKLLMLDVKRSLK</variation>
    <location>
        <position position="165"/>
    </location>
</feature>
<feature type="splice variant" id="VSP_043383" description="In isoform 3." evidence="26">
    <location>
        <begin position="347"/>
        <end position="380"/>
    </location>
</feature>
<feature type="splice variant" id="VSP_005125" description="In isoform 2, isoform 3 and isoform 4." evidence="26 27">
    <original>WLYWQPILTKMGFMSVILVGAFVGWTLFFQQNAL</original>
    <variation>PRLTDT</variation>
    <location>
        <begin position="382"/>
        <end position="415"/>
    </location>
</feature>
<feature type="mutagenesis site" description="Substrate-trapping mutant; catalytically inactive it forms a stable complex with physiological substrates including INSR and EGFR. Accumulates in the cytoplasm upon stimulation by insulin or EGF; isoform 2." evidence="10 25">
    <original>D</original>
    <variation>A</variation>
    <location>
        <position position="182"/>
    </location>
</feature>
<feature type="mutagenesis site" description="Impairs phosphatase activity.">
    <original>R</original>
    <variation>M</variation>
    <location>
        <position position="222"/>
    </location>
</feature>
<feature type="mutagenesis site" description="Alters phosphorylation by cyclin-dependent kinases of isoform 2 but has no effect on its phosphatase activity." evidence="12">
    <original>S</original>
    <variation>A</variation>
    <location>
        <position position="304"/>
    </location>
</feature>
<feature type="mutagenesis site" description="Alters location to the endoplasmic reticulum; isoform 1." evidence="24">
    <original>RKR</original>
    <variation>QQQ</variation>
    <location>
        <begin position="350"/>
        <end position="352"/>
    </location>
</feature>
<feature type="mutagenesis site" description="Prevents location to the nucleus; isoform 2." evidence="24">
    <original>K</original>
    <variation>Q</variation>
    <location>
        <position position="380"/>
    </location>
</feature>
<feature type="sequence conflict" description="In Ref. 1; AAA65997 and 7; M81478." evidence="28" ref="1 7">
    <original>T</original>
    <variation>R</variation>
    <location>
        <position position="407"/>
    </location>
</feature>
<feature type="helix" evidence="37">
    <location>
        <begin position="4"/>
        <end position="14"/>
    </location>
</feature>
<feature type="helix" evidence="37">
    <location>
        <begin position="18"/>
        <end position="28"/>
    </location>
</feature>
<feature type="helix" evidence="37">
    <location>
        <begin position="35"/>
        <end position="38"/>
    </location>
</feature>
<feature type="helix" evidence="37">
    <location>
        <begin position="40"/>
        <end position="45"/>
    </location>
</feature>
<feature type="turn" evidence="37">
    <location>
        <begin position="55"/>
        <end position="57"/>
    </location>
</feature>
<feature type="strand" evidence="37">
    <location>
        <begin position="58"/>
        <end position="60"/>
    </location>
</feature>
<feature type="strand" evidence="39">
    <location>
        <begin position="64"/>
        <end position="66"/>
    </location>
</feature>
<feature type="strand" evidence="37">
    <location>
        <begin position="68"/>
        <end position="76"/>
    </location>
</feature>
<feature type="helix" evidence="37">
    <location>
        <begin position="77"/>
        <end position="79"/>
    </location>
</feature>
<feature type="strand" evidence="37">
    <location>
        <begin position="81"/>
        <end position="86"/>
    </location>
</feature>
<feature type="turn" evidence="37">
    <location>
        <begin position="91"/>
        <end position="93"/>
    </location>
</feature>
<feature type="helix" evidence="37">
    <location>
        <begin position="94"/>
        <end position="104"/>
    </location>
</feature>
<feature type="strand" evidence="37">
    <location>
        <begin position="108"/>
        <end position="111"/>
    </location>
</feature>
<feature type="strand" evidence="37">
    <location>
        <begin position="115"/>
        <end position="117"/>
    </location>
</feature>
<feature type="strand" evidence="40">
    <location>
        <begin position="118"/>
        <end position="121"/>
    </location>
</feature>
<feature type="strand" evidence="37">
    <location>
        <begin position="129"/>
        <end position="132"/>
    </location>
</feature>
<feature type="strand" evidence="37">
    <location>
        <begin position="134"/>
        <end position="136"/>
    </location>
</feature>
<feature type="turn" evidence="37">
    <location>
        <begin position="137"/>
        <end position="140"/>
    </location>
</feature>
<feature type="strand" evidence="37">
    <location>
        <begin position="141"/>
        <end position="150"/>
    </location>
</feature>
<feature type="strand" evidence="37">
    <location>
        <begin position="152"/>
        <end position="163"/>
    </location>
</feature>
<feature type="turn" evidence="37">
    <location>
        <begin position="164"/>
        <end position="166"/>
    </location>
</feature>
<feature type="strand" evidence="37">
    <location>
        <begin position="169"/>
        <end position="177"/>
    </location>
</feature>
<feature type="strand" evidence="35">
    <location>
        <begin position="182"/>
        <end position="184"/>
    </location>
</feature>
<feature type="helix" evidence="37">
    <location>
        <begin position="189"/>
        <end position="200"/>
    </location>
</feature>
<feature type="turn" evidence="37">
    <location>
        <begin position="201"/>
        <end position="205"/>
    </location>
</feature>
<feature type="strand" evidence="37">
    <location>
        <begin position="212"/>
        <end position="221"/>
    </location>
</feature>
<feature type="helix" evidence="37">
    <location>
        <begin position="222"/>
        <end position="235"/>
    </location>
</feature>
<feature type="helix" evidence="38">
    <location>
        <begin position="236"/>
        <end position="238"/>
    </location>
</feature>
<feature type="helix" evidence="37">
    <location>
        <begin position="244"/>
        <end position="252"/>
    </location>
</feature>
<feature type="helix" evidence="37">
    <location>
        <begin position="262"/>
        <end position="275"/>
    </location>
</feature>
<feature type="helix" evidence="37">
    <location>
        <begin position="286"/>
        <end position="293"/>
    </location>
</feature>
<feature type="turn" evidence="36">
    <location>
        <begin position="294"/>
        <end position="296"/>
    </location>
</feature>
<feature type="modified residue" description="Phosphoserine" evidence="12 29">
    <location sequence="P17706-2">
        <position position="304"/>
    </location>
</feature>
<comment type="function">
    <text evidence="6 8 9 10 11 13 20 21 25">Non-receptor type tyrosine-specific phosphatase that dephosphorylates receptor protein tyrosine kinases including INSR, EGFR, CSF1R, PDGFR. Also dephosphorylates non-receptor protein tyrosine kinases like JAK1, JAK2, JAK3, Src family kinases, STAT1, STAT3 and STAT6 either in the nucleus or the cytoplasm. Negatively regulates numerous signaling pathways and biological processes like hematopoiesis, inflammatory response, cell proliferation and differentiation, and glucose homeostasis. Plays a multifaceted and important role in the development of the immune system. Functions in T-cell receptor signaling through dephosphorylation of FYN and LCK to control T-cells differentiation and activation. Dephosphorylates CSF1R, negatively regulating its downstream signaling and macrophage differentiation. Negatively regulates cytokine (IL2/interleukin-2 and interferon)-mediated signaling through dephosphorylation of the cytoplasmic kinases JAK1, JAK3 and their substrate STAT1, that propagate signaling downstream of the cytokine receptors. Also regulates the IL6/interleukin-6 and IL4/interleukin-4 cytokine signaling through dephosphorylation of STAT3 and STAT6 respectively. In addition to the immune system, it is involved in anchorage-dependent, negative regulation of EGF-stimulated cell growth. Activated by the integrin ITGA1/ITGB1, it dephosphorylates EGFR and negatively regulates EGF signaling. Dephosphorylates PDGFRB and negatively regulates platelet-derived growth factor receptor-beta signaling pathway and therefore cell proliferation. Negatively regulates tumor necrosis factor-mediated signaling downstream via MAPK through SRC dephosphorylation. May also regulate the hepatocyte growth factor receptor signaling pathway through dephosphorylation of the hepatocyte growth factor receptor MET. Also plays an important role in glucose homeostasis. For instance, negatively regulates the insulin receptor signaling pathway through the dephosphorylation of INSR and control gluconeogenesis and liver glucose production through negative regulation of the IL6 signaling pathways. May also bind DNA.</text>
</comment>
<comment type="catalytic activity">
    <reaction evidence="5">
        <text>O-phospho-L-tyrosyl-[protein] + H2O = L-tyrosyl-[protein] + phosphate</text>
        <dbReference type="Rhea" id="RHEA:10684"/>
        <dbReference type="Rhea" id="RHEA-COMP:10136"/>
        <dbReference type="Rhea" id="RHEA-COMP:20101"/>
        <dbReference type="ChEBI" id="CHEBI:15377"/>
        <dbReference type="ChEBI" id="CHEBI:43474"/>
        <dbReference type="ChEBI" id="CHEBI:46858"/>
        <dbReference type="ChEBI" id="CHEBI:61978"/>
        <dbReference type="EC" id="3.1.3.48"/>
    </reaction>
</comment>
<comment type="biophysicochemical properties">
    <kinetics>
        <KM evidence="7">0.48 mM for p-nitrophenyl phosphate (at pH 6.5 and 25 degrees Celsius)</KM>
    </kinetics>
</comment>
<comment type="subunit">
    <text evidence="3 8 13 14 15 17 20 22">Interacts with RMDN3. Isoform 1 interacts with TMED9. Isoform 1 interacts with STX17; dephosphorylates STX17. Interacts with ITGA1 (via cytoplasmic domain); activates the phosphatase activity towards EGFR. Interacts with TRAF2; probably involved in tumor necrosis factor-mediated signaling. Interacts with MET. Interacts with FAM220A and STAT3; interaction with FAM220A promotes interaction of PTPN2 with transcriptional activator STAT3, leading to dephosphorylation of STAT3 by PTPN2 and negative regulation of STAT3 transcriptional activator activity (By similarity).</text>
</comment>
<comment type="interaction">
    <interactant intactId="EBI-984930">
        <id>P17706</id>
    </interactant>
    <interactant intactId="EBI-2464511">
        <id>P20908</id>
        <label>COL5A1</label>
    </interactant>
    <organismsDiffer>false</organismsDiffer>
    <experiments>2</experiments>
</comment>
<comment type="interaction">
    <interactant intactId="EBI-984930">
        <id>P17706</id>
    </interactant>
    <interactant intactId="EBI-286316">
        <id>P10912</id>
        <label>GHR</label>
    </interactant>
    <organismsDiffer>false</organismsDiffer>
    <experiments>8</experiments>
</comment>
<comment type="interaction">
    <interactant intactId="EBI-984930">
        <id>P17706</id>
    </interactant>
    <interactant intactId="EBI-26585631">
        <id>Q2GHU2</id>
        <label>ECH_0166</label>
    </interactant>
    <organismsDiffer>true</organismsDiffer>
    <experiments>4</experiments>
</comment>
<comment type="interaction">
    <interactant intactId="EBI-4409481">
        <id>P17706-1</id>
    </interactant>
    <interactant intactId="EBI-998422">
        <id>P49755</id>
        <label>TMED10</label>
    </interactant>
    <organismsDiffer>false</organismsDiffer>
    <experiments>5</experiments>
</comment>
<comment type="interaction">
    <interactant intactId="EBI-4409481">
        <id>P17706-1</id>
    </interactant>
    <interactant intactId="EBI-1056827">
        <id>Q9BVK6</id>
        <label>TMED9</label>
    </interactant>
    <organismsDiffer>false</organismsDiffer>
    <experiments>5</experiments>
</comment>
<comment type="subcellular location">
    <molecule>Isoform 1</molecule>
    <subcellularLocation>
        <location evidence="24">Endoplasmic reticulum</location>
    </subcellularLocation>
    <subcellularLocation>
        <location evidence="24">Endoplasmic reticulum-Golgi intermediate compartment</location>
    </subcellularLocation>
    <text evidence="24">Targeted to the endoplasmic reticulum by its C-terminal hydrophobic region.</text>
</comment>
<comment type="subcellular location">
    <molecule>Isoform 2</molecule>
    <subcellularLocation>
        <location>Nucleus</location>
    </subcellularLocation>
    <subcellularLocation>
        <location>Cytoplasm</location>
    </subcellularLocation>
    <subcellularLocation>
        <location>Cell membrane</location>
    </subcellularLocation>
    <text evidence="1 25">Predominantly localizes to chromatin (By similarity). Able to shuttle between the nucleus and the cytoplasm and to dephosphorylate plasma membrane receptors (PubMed:9488479). Recruited by activated ITGA1 at the plasma membrane.</text>
</comment>
<comment type="alternative products">
    <event type="alternative splicing"/>
    <isoform>
        <id>P17706-1</id>
        <name>1</name>
        <name>PTPB</name>
        <name>p48TC</name>
        <name>TC48</name>
        <name>TC-PTPb</name>
        <sequence type="displayed"/>
    </isoform>
    <isoform>
        <id>P17706-2</id>
        <name>2</name>
        <name>PTPA</name>
        <name>p45TC</name>
        <name>TC45</name>
        <name>TC-PTPa</name>
        <sequence type="described" ref="VSP_005125"/>
    </isoform>
    <isoform>
        <id>P17706-3</id>
        <name>3</name>
        <sequence type="described" ref="VSP_043383 VSP_005125"/>
    </isoform>
    <isoform>
        <id>P17706-4</id>
        <name>4</name>
        <sequence type="described" ref="VSP_054821 VSP_005125"/>
    </isoform>
</comment>
<comment type="tissue specificity">
    <text evidence="19 23">Ubiquitously expressed. Isoform 2 is probably the major isoform. Isoform 1 is expressed in T-cells and in placenta.</text>
</comment>
<comment type="induction">
    <text evidence="18">Up-regulated by IL4/interleukin-4 (at protein level).</text>
</comment>
<comment type="PTM">
    <molecule>Isoform 2</molecule>
    <text evidence="12 16">Specifically phosphorylated in a cell cycle-dependent manner by cyclin-dependent kinases CDK1 and CDK2. Probably activated through phosphorylation by PKR.</text>
</comment>
<comment type="miscellaneous">
    <molecule>Isoform 1</molecule>
    <text>Minor isoform.</text>
</comment>
<comment type="miscellaneous">
    <molecule>Isoform 2</molecule>
    <text evidence="12 29">Major isoform. Contains a nuclear location signal at positions 377-381 (PubMed:7593185) and an autoinhibitory region acting through intramolecular interactions is found at positions 353-387.</text>
</comment>
<comment type="similarity">
    <text evidence="28">Belongs to the protein-tyrosine phosphatase family. Non-receptor class 1 subfamily.</text>
</comment>
<keyword id="KW-0002">3D-structure</keyword>
<keyword id="KW-0025">Alternative splicing</keyword>
<keyword id="KW-1003">Cell membrane</keyword>
<keyword id="KW-0963">Cytoplasm</keyword>
<keyword id="KW-0256">Endoplasmic reticulum</keyword>
<keyword id="KW-0378">Hydrolase</keyword>
<keyword id="KW-0472">Membrane</keyword>
<keyword id="KW-0539">Nucleus</keyword>
<keyword id="KW-0597">Phosphoprotein</keyword>
<keyword id="KW-0904">Protein phosphatase</keyword>
<keyword id="KW-1267">Proteomics identification</keyword>
<keyword id="KW-1185">Reference proteome</keyword>
<keyword id="KW-0702">S-nitrosylation</keyword>
<protein>
    <recommendedName>
        <fullName>Tyrosine-protein phosphatase non-receptor type 2</fullName>
        <ecNumber>3.1.3.48</ecNumber>
    </recommendedName>
    <alternativeName>
        <fullName>T-cell protein-tyrosine phosphatase</fullName>
        <shortName>TCPTP</shortName>
    </alternativeName>
</protein>
<organism>
    <name type="scientific">Homo sapiens</name>
    <name type="common">Human</name>
    <dbReference type="NCBI Taxonomy" id="9606"/>
    <lineage>
        <taxon>Eukaryota</taxon>
        <taxon>Metazoa</taxon>
        <taxon>Chordata</taxon>
        <taxon>Craniata</taxon>
        <taxon>Vertebrata</taxon>
        <taxon>Euteleostomi</taxon>
        <taxon>Mammalia</taxon>
        <taxon>Eutheria</taxon>
        <taxon>Euarchontoglires</taxon>
        <taxon>Primates</taxon>
        <taxon>Haplorrhini</taxon>
        <taxon>Catarrhini</taxon>
        <taxon>Hominidae</taxon>
        <taxon>Homo</taxon>
    </lineage>
</organism>
<gene>
    <name type="primary">PTPN2</name>
    <name type="synonym">PTPT</name>
</gene>
<name>PTN2_HUMAN</name>
<evidence type="ECO:0000250" key="1"/>
<evidence type="ECO:0000250" key="2">
    <source>
        <dbReference type="UniProtKB" id="P18031"/>
    </source>
</evidence>
<evidence type="ECO:0000250" key="3">
    <source>
        <dbReference type="UniProtKB" id="Q06180"/>
    </source>
</evidence>
<evidence type="ECO:0000255" key="4">
    <source>
        <dbReference type="PROSITE-ProRule" id="PRU00160"/>
    </source>
</evidence>
<evidence type="ECO:0000255" key="5">
    <source>
        <dbReference type="PROSITE-ProRule" id="PRU10044"/>
    </source>
</evidence>
<evidence type="ECO:0000269" key="6">
    <source>
    </source>
</evidence>
<evidence type="ECO:0000269" key="7">
    <source>
    </source>
</evidence>
<evidence type="ECO:0000269" key="8">
    <source>
    </source>
</evidence>
<evidence type="ECO:0000269" key="9">
    <source>
    </source>
</evidence>
<evidence type="ECO:0000269" key="10">
    <source>
    </source>
</evidence>
<evidence type="ECO:0000269" key="11">
    <source>
    </source>
</evidence>
<evidence type="ECO:0000269" key="12">
    <source>
    </source>
</evidence>
<evidence type="ECO:0000269" key="13">
    <source>
    </source>
</evidence>
<evidence type="ECO:0000269" key="14">
    <source>
    </source>
</evidence>
<evidence type="ECO:0000269" key="15">
    <source>
    </source>
</evidence>
<evidence type="ECO:0000269" key="16">
    <source>
    </source>
</evidence>
<evidence type="ECO:0000269" key="17">
    <source>
    </source>
</evidence>
<evidence type="ECO:0000269" key="18">
    <source>
    </source>
</evidence>
<evidence type="ECO:0000269" key="19">
    <source>
    </source>
</evidence>
<evidence type="ECO:0000269" key="20">
    <source>
    </source>
</evidence>
<evidence type="ECO:0000269" key="21">
    <source>
    </source>
</evidence>
<evidence type="ECO:0000269" key="22">
    <source>
    </source>
</evidence>
<evidence type="ECO:0000269" key="23">
    <source>
    </source>
</evidence>
<evidence type="ECO:0000269" key="24">
    <source>
    </source>
</evidence>
<evidence type="ECO:0000269" key="25">
    <source>
    </source>
</evidence>
<evidence type="ECO:0000303" key="26">
    <source>
    </source>
</evidence>
<evidence type="ECO:0000303" key="27">
    <source>
    </source>
</evidence>
<evidence type="ECO:0000305" key="28"/>
<evidence type="ECO:0000305" key="29">
    <source>
    </source>
</evidence>
<evidence type="ECO:0007744" key="30">
    <source>
    </source>
</evidence>
<evidence type="ECO:0007744" key="31">
    <source>
    </source>
</evidence>
<evidence type="ECO:0007744" key="32">
    <source>
    </source>
</evidence>
<evidence type="ECO:0007744" key="33">
    <source>
    </source>
</evidence>
<evidence type="ECO:0007744" key="34">
    <source>
    </source>
</evidence>
<evidence type="ECO:0007829" key="35">
    <source>
        <dbReference type="PDB" id="1L8K"/>
    </source>
</evidence>
<evidence type="ECO:0007829" key="36">
    <source>
        <dbReference type="PDB" id="7F5N"/>
    </source>
</evidence>
<evidence type="ECO:0007829" key="37">
    <source>
        <dbReference type="PDB" id="7F5O"/>
    </source>
</evidence>
<evidence type="ECO:0007829" key="38">
    <source>
        <dbReference type="PDB" id="7UAD"/>
    </source>
</evidence>
<evidence type="ECO:0007829" key="39">
    <source>
        <dbReference type="PDB" id="9C54"/>
    </source>
</evidence>
<evidence type="ECO:0007829" key="40">
    <source>
        <dbReference type="PDB" id="9C55"/>
    </source>
</evidence>
<reference key="1">
    <citation type="journal article" date="1989" name="Proc. Natl. Acad. Sci. U.S.A.">
        <title>cDNA isolated from a human T-cell library encodes a member of the protein-tyrosine-phosphatase family.</title>
        <authorList>
            <person name="Cool D."/>
            <person name="Tonks N.K."/>
            <person name="Charbonneau H."/>
            <person name="Walsh K.A."/>
            <person name="Fischer E.H."/>
            <person name="Krebs E.G."/>
        </authorList>
    </citation>
    <scope>NUCLEOTIDE SEQUENCE [MRNA] (ISOFORM 1)</scope>
    <scope>TISSUE SPECIFICITY</scope>
    <source>
        <tissue>T-cell</tissue>
    </source>
</reference>
<reference key="2">
    <citation type="journal article" date="2004" name="Nat. Genet.">
        <title>Complete sequencing and characterization of 21,243 full-length human cDNAs.</title>
        <authorList>
            <person name="Ota T."/>
            <person name="Suzuki Y."/>
            <person name="Nishikawa T."/>
            <person name="Otsuki T."/>
            <person name="Sugiyama T."/>
            <person name="Irie R."/>
            <person name="Wakamatsu A."/>
            <person name="Hayashi K."/>
            <person name="Sato H."/>
            <person name="Nagai K."/>
            <person name="Kimura K."/>
            <person name="Makita H."/>
            <person name="Sekine M."/>
            <person name="Obayashi M."/>
            <person name="Nishi T."/>
            <person name="Shibahara T."/>
            <person name="Tanaka T."/>
            <person name="Ishii S."/>
            <person name="Yamamoto J."/>
            <person name="Saito K."/>
            <person name="Kawai Y."/>
            <person name="Isono Y."/>
            <person name="Nakamura Y."/>
            <person name="Nagahari K."/>
            <person name="Murakami K."/>
            <person name="Yasuda T."/>
            <person name="Iwayanagi T."/>
            <person name="Wagatsuma M."/>
            <person name="Shiratori A."/>
            <person name="Sudo H."/>
            <person name="Hosoiri T."/>
            <person name="Kaku Y."/>
            <person name="Kodaira H."/>
            <person name="Kondo H."/>
            <person name="Sugawara M."/>
            <person name="Takahashi M."/>
            <person name="Kanda K."/>
            <person name="Yokoi T."/>
            <person name="Furuya T."/>
            <person name="Kikkawa E."/>
            <person name="Omura Y."/>
            <person name="Abe K."/>
            <person name="Kamihara K."/>
            <person name="Katsuta N."/>
            <person name="Sato K."/>
            <person name="Tanikawa M."/>
            <person name="Yamazaki M."/>
            <person name="Ninomiya K."/>
            <person name="Ishibashi T."/>
            <person name="Yamashita H."/>
            <person name="Murakawa K."/>
            <person name="Fujimori K."/>
            <person name="Tanai H."/>
            <person name="Kimata M."/>
            <person name="Watanabe M."/>
            <person name="Hiraoka S."/>
            <person name="Chiba Y."/>
            <person name="Ishida S."/>
            <person name="Ono Y."/>
            <person name="Takiguchi S."/>
            <person name="Watanabe S."/>
            <person name="Yosida M."/>
            <person name="Hotuta T."/>
            <person name="Kusano J."/>
            <person name="Kanehori K."/>
            <person name="Takahashi-Fujii A."/>
            <person name="Hara H."/>
            <person name="Tanase T.-O."/>
            <person name="Nomura Y."/>
            <person name="Togiya S."/>
            <person name="Komai F."/>
            <person name="Hara R."/>
            <person name="Takeuchi K."/>
            <person name="Arita M."/>
            <person name="Imose N."/>
            <person name="Musashino K."/>
            <person name="Yuuki H."/>
            <person name="Oshima A."/>
            <person name="Sasaki N."/>
            <person name="Aotsuka S."/>
            <person name="Yoshikawa Y."/>
            <person name="Matsunawa H."/>
            <person name="Ichihara T."/>
            <person name="Shiohata N."/>
            <person name="Sano S."/>
            <person name="Moriya S."/>
            <person name="Momiyama H."/>
            <person name="Satoh N."/>
            <person name="Takami S."/>
            <person name="Terashima Y."/>
            <person name="Suzuki O."/>
            <person name="Nakagawa S."/>
            <person name="Senoh A."/>
            <person name="Mizoguchi H."/>
            <person name="Goto Y."/>
            <person name="Shimizu F."/>
            <person name="Wakebe H."/>
            <person name="Hishigaki H."/>
            <person name="Watanabe T."/>
            <person name="Sugiyama A."/>
            <person name="Takemoto M."/>
            <person name="Kawakami B."/>
            <person name="Yamazaki M."/>
            <person name="Watanabe K."/>
            <person name="Kumagai A."/>
            <person name="Itakura S."/>
            <person name="Fukuzumi Y."/>
            <person name="Fujimori Y."/>
            <person name="Komiyama M."/>
            <person name="Tashiro H."/>
            <person name="Tanigami A."/>
            <person name="Fujiwara T."/>
            <person name="Ono T."/>
            <person name="Yamada K."/>
            <person name="Fujii Y."/>
            <person name="Ozaki K."/>
            <person name="Hirao M."/>
            <person name="Ohmori Y."/>
            <person name="Kawabata A."/>
            <person name="Hikiji T."/>
            <person name="Kobatake N."/>
            <person name="Inagaki H."/>
            <person name="Ikema Y."/>
            <person name="Okamoto S."/>
            <person name="Okitani R."/>
            <person name="Kawakami T."/>
            <person name="Noguchi S."/>
            <person name="Itoh T."/>
            <person name="Shigeta K."/>
            <person name="Senba T."/>
            <person name="Matsumura K."/>
            <person name="Nakajima Y."/>
            <person name="Mizuno T."/>
            <person name="Morinaga M."/>
            <person name="Sasaki M."/>
            <person name="Togashi T."/>
            <person name="Oyama M."/>
            <person name="Hata H."/>
            <person name="Watanabe M."/>
            <person name="Komatsu T."/>
            <person name="Mizushima-Sugano J."/>
            <person name="Satoh T."/>
            <person name="Shirai Y."/>
            <person name="Takahashi Y."/>
            <person name="Nakagawa K."/>
            <person name="Okumura K."/>
            <person name="Nagase T."/>
            <person name="Nomura N."/>
            <person name="Kikuchi H."/>
            <person name="Masuho Y."/>
            <person name="Yamashita R."/>
            <person name="Nakai K."/>
            <person name="Yada T."/>
            <person name="Nakamura Y."/>
            <person name="Ohara O."/>
            <person name="Isogai T."/>
            <person name="Sugano S."/>
        </authorList>
    </citation>
    <scope>NUCLEOTIDE SEQUENCE [LARGE SCALE MRNA] (ISOFORM 1)</scope>
    <source>
        <tissue>Testis</tissue>
    </source>
</reference>
<reference key="3">
    <citation type="submission" date="2005-12" db="EMBL/GenBank/DDBJ databases">
        <authorList>
            <consortium name="NHLBI resequencing and genotyping service (RS&amp;G)"/>
        </authorList>
    </citation>
    <scope>NUCLEOTIDE SEQUENCE [GENOMIC DNA]</scope>
</reference>
<reference key="4">
    <citation type="journal article" date="2005" name="Nature">
        <title>DNA sequence and analysis of human chromosome 18.</title>
        <authorList>
            <person name="Nusbaum C."/>
            <person name="Zody M.C."/>
            <person name="Borowsky M.L."/>
            <person name="Kamal M."/>
            <person name="Kodira C.D."/>
            <person name="Taylor T.D."/>
            <person name="Whittaker C.A."/>
            <person name="Chang J.L."/>
            <person name="Cuomo C.A."/>
            <person name="Dewar K."/>
            <person name="FitzGerald M.G."/>
            <person name="Yang X."/>
            <person name="Abouelleil A."/>
            <person name="Allen N.R."/>
            <person name="Anderson S."/>
            <person name="Bloom T."/>
            <person name="Bugalter B."/>
            <person name="Butler J."/>
            <person name="Cook A."/>
            <person name="DeCaprio D."/>
            <person name="Engels R."/>
            <person name="Garber M."/>
            <person name="Gnirke A."/>
            <person name="Hafez N."/>
            <person name="Hall J.L."/>
            <person name="Norman C.H."/>
            <person name="Itoh T."/>
            <person name="Jaffe D.B."/>
            <person name="Kuroki Y."/>
            <person name="Lehoczky J."/>
            <person name="Lui A."/>
            <person name="Macdonald P."/>
            <person name="Mauceli E."/>
            <person name="Mikkelsen T.S."/>
            <person name="Naylor J.W."/>
            <person name="Nicol R."/>
            <person name="Nguyen C."/>
            <person name="Noguchi H."/>
            <person name="O'Leary S.B."/>
            <person name="Piqani B."/>
            <person name="Smith C.L."/>
            <person name="Talamas J.A."/>
            <person name="Topham K."/>
            <person name="Totoki Y."/>
            <person name="Toyoda A."/>
            <person name="Wain H.M."/>
            <person name="Young S.K."/>
            <person name="Zeng Q."/>
            <person name="Zimmer A.R."/>
            <person name="Fujiyama A."/>
            <person name="Hattori M."/>
            <person name="Birren B.W."/>
            <person name="Sakaki Y."/>
            <person name="Lander E.S."/>
        </authorList>
    </citation>
    <scope>NUCLEOTIDE SEQUENCE [LARGE SCALE GENOMIC DNA]</scope>
</reference>
<reference key="5">
    <citation type="submission" date="2005-09" db="EMBL/GenBank/DDBJ databases">
        <authorList>
            <person name="Mural R.J."/>
            <person name="Istrail S."/>
            <person name="Sutton G.G."/>
            <person name="Florea L."/>
            <person name="Halpern A.L."/>
            <person name="Mobarry C.M."/>
            <person name="Lippert R."/>
            <person name="Walenz B."/>
            <person name="Shatkay H."/>
            <person name="Dew I."/>
            <person name="Miller J.R."/>
            <person name="Flanigan M.J."/>
            <person name="Edwards N.J."/>
            <person name="Bolanos R."/>
            <person name="Fasulo D."/>
            <person name="Halldorsson B.V."/>
            <person name="Hannenhalli S."/>
            <person name="Turner R."/>
            <person name="Yooseph S."/>
            <person name="Lu F."/>
            <person name="Nusskern D.R."/>
            <person name="Shue B.C."/>
            <person name="Zheng X.H."/>
            <person name="Zhong F."/>
            <person name="Delcher A.L."/>
            <person name="Huson D.H."/>
            <person name="Kravitz S.A."/>
            <person name="Mouchard L."/>
            <person name="Reinert K."/>
            <person name="Remington K.A."/>
            <person name="Clark A.G."/>
            <person name="Waterman M.S."/>
            <person name="Eichler E.E."/>
            <person name="Adams M.D."/>
            <person name="Hunkapiller M.W."/>
            <person name="Myers E.W."/>
            <person name="Venter J.C."/>
        </authorList>
    </citation>
    <scope>NUCLEOTIDE SEQUENCE [LARGE SCALE GENOMIC DNA]</scope>
</reference>
<reference key="6">
    <citation type="journal article" date="2004" name="Genome Res.">
        <title>The status, quality, and expansion of the NIH full-length cDNA project: the Mammalian Gene Collection (MGC).</title>
        <authorList>
            <consortium name="The MGC Project Team"/>
        </authorList>
    </citation>
    <scope>NUCLEOTIDE SEQUENCE [LARGE SCALE MRNA] (ISOFORMS 1 AND 3)</scope>
    <source>
        <tissue>Brain</tissue>
        <tissue>Eye</tissue>
    </source>
</reference>
<reference key="7">
    <citation type="journal article" date="1992" name="Proc. Natl. Acad. Sci. U.S.A.">
        <title>Cloning and characterization of a mouse cDNA encoding a cytoplasmic protein-tyrosine-phosphatase.</title>
        <authorList>
            <person name="Mosinger B. Jr."/>
            <person name="Tillmann U."/>
            <person name="Westphal H."/>
            <person name="Tremblay M.L."/>
        </authorList>
    </citation>
    <scope>NUCLEOTIDE SEQUENCE [MRNA] OF 350-415 (ISOFORM 2)</scope>
    <scope>TISSUE SPECIFICITY</scope>
</reference>
<reference key="8">
    <citation type="journal article" date="1995" name="J. Cell Biol.">
        <title>COOH-terminal sequence motifs target the T cell protein tyrosine phosphatase to the ER and nucleus.</title>
        <authorList>
            <person name="Lorenzen J.A."/>
            <person name="Dadabay C.Y."/>
            <person name="Fischer E.H."/>
        </authorList>
    </citation>
    <scope>SUBCELLULAR LOCATION (ISOFORMS 1 AND 2)</scope>
    <scope>MUTAGENESIS OF 350-ARG--ARG-352 AND LYS-380</scope>
</reference>
<reference key="9">
    <citation type="journal article" date="1997" name="J. Biol. Chem.">
        <title>The noncatalytic C-terminal segment of the T cell protein tyrosine phosphatase regulates activity via an intramolecular mechanism.</title>
        <authorList>
            <person name="Hao L."/>
            <person name="Tiganis T."/>
            <person name="Tonks N.K."/>
            <person name="Charbonneau H."/>
        </authorList>
    </citation>
    <scope>ACTIVITY REGULATION</scope>
</reference>
<reference key="10">
    <citation type="journal article" date="1998" name="Mol. Cell. Biol.">
        <title>Epidermal growth factor receptor and the adaptor protein p52Shc are specific substrates of T-cell protein tyrosine phosphatase.</title>
        <authorList>
            <person name="Tiganis T."/>
            <person name="Bennett A.M."/>
            <person name="Ravichandran K.S."/>
            <person name="Tonks N.K."/>
        </authorList>
    </citation>
    <scope>FUNCTION IN DEPHOSPHORYLATION OF EGFR AND SHC1</scope>
    <scope>MUTAGENESIS OF ASP-182</scope>
    <scope>SUBCELLULAR LOCATION (ISOFORM 2)</scope>
</reference>
<reference key="11">
    <citation type="journal article" date="2000" name="J. Biol. Chem.">
        <title>Identification of tyrosine phosphatases that dephosphorylate the insulin receptor. A brute force approach based on 'substrate-trapping' mutants.</title>
        <authorList>
            <person name="Waelchli S."/>
            <person name="Curchod M.L."/>
            <person name="Gobert R.P."/>
            <person name="Arkinstall S."/>
            <person name="Hooft van Huijsduijnen R."/>
        </authorList>
    </citation>
    <scope>FUNCTION IN DEPHOSPHORYLATION OF INSR</scope>
</reference>
<reference key="12">
    <citation type="journal article" date="2002" name="Biochem. Biophys. Res. Commun.">
        <title>The nuclear isoform of protein-tyrosine phosphatase TC-PTP regulates interleukin-6-mediated signaling pathway through STAT3 dephosphorylation.</title>
        <authorList>
            <person name="Yamamoto T."/>
            <person name="Sekine Y."/>
            <person name="Kashima K."/>
            <person name="Kubota A."/>
            <person name="Sato N."/>
            <person name="Aoki N."/>
            <person name="Matsuda T."/>
        </authorList>
    </citation>
    <scope>FUNCTION IN DEPHOSPHORYLATION OF STAT3(ISOFORM 2)</scope>
</reference>
<reference key="13">
    <citation type="journal article" date="2002" name="Curr. Biol.">
        <title>The T cell protein tyrosine phosphatase is a negative regulator of janus family kinases 1 and 3.</title>
        <authorList>
            <person name="Simoncic P.D."/>
            <person name="Lee-Loy A."/>
            <person name="Barber D.L."/>
            <person name="Tremblay M.L."/>
            <person name="McGlade C.J."/>
        </authorList>
    </citation>
    <scope>FUNCTION IN DEPHOSPHORYLATION OF JAK1 AND JAK3</scope>
    <scope>INTERACTION WITH JAK1 AND JAK3</scope>
</reference>
<reference key="14">
    <citation type="journal article" date="2002" name="Mol. Cell. Biol.">
        <title>Identification of a nuclear Stat1 protein tyrosine phosphatase.</title>
        <authorList>
            <person name="ten Hoeve J."/>
            <person name="de Jesus Ibarra-Sanchez M."/>
            <person name="Fu Y."/>
            <person name="Zhu W."/>
            <person name="Tremblay M."/>
            <person name="David M."/>
            <person name="Shuai K."/>
        </authorList>
    </citation>
    <scope>FUNCTION IN DEPHOSPHORYLATION OF STAT1</scope>
</reference>
<reference key="15">
    <citation type="journal article" date="2003" name="Mol. Cell. Biol.">
        <title>Regulation of insulin receptor signaling by the protein tyrosine phosphatase TCPTP.</title>
        <authorList>
            <person name="Galic S."/>
            <person name="Klingler-Hoffmann M."/>
            <person name="Fodero-Tavoletti M.T."/>
            <person name="Puryer M.A."/>
            <person name="Meng T.C."/>
            <person name="Tonks N.K."/>
            <person name="Tiganis T."/>
        </authorList>
    </citation>
    <scope>FUNCTION IN DEPHOSPHORYLATION OF INSR</scope>
    <scope>MUTAGENESIS OF ASP-182</scope>
    <scope>SUBCELLULAR LOCATION (ISOFORM 2)</scope>
</reference>
<reference key="16">
    <citation type="journal article" date="2004" name="Biochem. J.">
        <title>The T-cell protein tyrosine phosphatase is phosphorylated on Ser-304 by cyclin-dependent protein kinases in mitosis.</title>
        <authorList>
            <person name="Bukczynska P."/>
            <person name="Klingler-Hoffmann M."/>
            <person name="Mitchelhill K.I."/>
            <person name="Lam M.H."/>
            <person name="Ciccomancini M."/>
            <person name="Tonks N.K."/>
            <person name="Sarcevic B."/>
            <person name="Kemp B.E."/>
            <person name="Tiganis T."/>
        </authorList>
    </citation>
    <scope>PHOSPHORYLATION AT SER-304 BY CDK1 AND CDK2 (ISOFORM 2)</scope>
    <scope>MUTAGENESIS OF SER-304</scope>
</reference>
<reference key="17">
    <citation type="journal article" date="2004" name="Mol. Cell. Biol.">
        <title>Site-selective regulation of platelet-derived growth factor beta receptor tyrosine phosphorylation by T-cell protein tyrosine phosphatase.</title>
        <authorList>
            <person name="Persson C."/>
            <person name="Saevenhed C."/>
            <person name="Bourdeau A."/>
            <person name="Tremblay M.L."/>
            <person name="Markova B."/>
            <person name="Boehmer F.D."/>
            <person name="Haj F.G."/>
            <person name="Neel B.G."/>
            <person name="Elson A."/>
            <person name="Heldin C.H."/>
            <person name="Roennstrand L."/>
            <person name="Ostman A."/>
            <person name="Hellberg C."/>
        </authorList>
    </citation>
    <scope>FUNCTION IN DEPHOSPHORYLATION OF PDGFRB</scope>
</reference>
<reference key="18">
    <citation type="journal article" date="2005" name="Histochem. Cell Biol.">
        <title>The novel protein PTPIP51 exhibits tissue- and cell-specific expression.</title>
        <authorList>
            <person name="Stenzinger A."/>
            <person name="Kajosch T."/>
            <person name="Tag C."/>
            <person name="Porsche A."/>
            <person name="Welte I."/>
            <person name="Hofer H.W."/>
            <person name="Steger K."/>
            <person name="Wimmer M."/>
        </authorList>
    </citation>
    <scope>INTERACTION WITH RMDN3</scope>
</reference>
<reference key="19">
    <citation type="journal article" date="2005" name="Nat. Cell Biol.">
        <title>Negative regulation of EGFR signalling through integrin-alpha1beta1-mediated activation of protein tyrosine phosphatase TCPTP.</title>
        <authorList>
            <person name="Mattila E."/>
            <person name="Pellinen T."/>
            <person name="Nevo J."/>
            <person name="Vuoriluoto K."/>
            <person name="Arjonen A."/>
            <person name="Ivaska J."/>
        </authorList>
    </citation>
    <scope>FUNCTION IN DEPHOSPHORYLATION OF EGFR</scope>
    <scope>INTERACTION WITH ITGA1</scope>
    <scope>SUBCELLULAR LOCATION</scope>
</reference>
<reference key="20">
    <citation type="journal article" date="2005" name="Nat. Immunol.">
        <title>Selective regulation of tumor necrosis factor-induced Erk signaling by Src family kinases and the T cell protein tyrosine phosphatase.</title>
        <authorList>
            <person name="van Vliet C."/>
            <person name="Bukczynska P.E."/>
            <person name="Puryer M.A."/>
            <person name="Sadek C.M."/>
            <person name="Shields B.J."/>
            <person name="Tremblay M.L."/>
            <person name="Tiganis T."/>
        </authorList>
    </citation>
    <scope>INTERACTION WITH TRAF2</scope>
</reference>
<reference key="21">
    <citation type="journal article" date="2006" name="J. Biol. Chem.">
        <title>The catalytic activity of the eukaryotic initiation factor-2alpha kinase PKR is required to negatively regulate Stat1 and Stat3 via activation of the T-cell protein-tyrosine phosphatase.</title>
        <authorList>
            <person name="Wang S."/>
            <person name="Raven J.F."/>
            <person name="Baltzis D."/>
            <person name="Kazemi S."/>
            <person name="Brunet D.V."/>
            <person name="Hatzoglou M."/>
            <person name="Tremblay M.L."/>
            <person name="Koromilas A.E."/>
        </authorList>
    </citation>
    <scope>PHOSPHORYLATION BY PKR</scope>
</reference>
<reference key="22">
    <citation type="journal article" date="2006" name="J. Cell Sci.">
        <title>Evidence for a role of transmembrane protein p25 in localization of protein tyrosine phosphatase TC48 to the ER.</title>
        <authorList>
            <person name="Gupta V."/>
            <person name="Swarup G."/>
        </authorList>
    </citation>
    <scope>INTERACTION WITH TMED9</scope>
</reference>
<reference key="23">
    <citation type="journal article" date="2007" name="Mol. Cell. Biol.">
        <title>T-cell protein tyrosine phosphatase, distinctively expressed in activated-B-cell-like diffuse large B-cell lymphomas, is the nuclear phosphatase of STAT6.</title>
        <authorList>
            <person name="Lu X."/>
            <person name="Chen J."/>
            <person name="Sasmono R.T."/>
            <person name="Hsi E.D."/>
            <person name="Sarosiek K.A."/>
            <person name="Tiganis T."/>
            <person name="Lossos I.S."/>
        </authorList>
    </citation>
    <scope>FUNCTION IN DEPHOSPHORYLATION OF STAT6 (ISOFORM 2)</scope>
    <scope>INDUCTION BY IL4</scope>
</reference>
<reference key="24">
    <citation type="journal article" date="2008" name="J. Biol. Chem.">
        <title>Regulation of the Met receptor-tyrosine kinase by the protein-tyrosine phosphatase 1B and T-cell phosphatase.</title>
        <authorList>
            <person name="Sangwan V."/>
            <person name="Paliouras G.N."/>
            <person name="Abella J.V."/>
            <person name="Dube N."/>
            <person name="Monast A."/>
            <person name="Tremblay M.L."/>
            <person name="Park M."/>
        </authorList>
    </citation>
    <scope>FUNCTION IN DEPHOSPHORYLATION OF MET</scope>
    <scope>INTERACTION WITH MET</scope>
</reference>
<reference key="25">
    <citation type="journal article" date="2008" name="Proc. Natl. Acad. Sci. U.S.A.">
        <title>A quantitative atlas of mitotic phosphorylation.</title>
        <authorList>
            <person name="Dephoure N."/>
            <person name="Zhou C."/>
            <person name="Villen J."/>
            <person name="Beausoleil S.A."/>
            <person name="Bakalarski C.E."/>
            <person name="Elledge S.J."/>
            <person name="Gygi S.P."/>
        </authorList>
    </citation>
    <scope>PHOSPHORYLATION [LARGE SCALE ANALYSIS] AT SER-298 AND SER-304</scope>
    <scope>IDENTIFICATION BY MASS SPECTROMETRY [LARGE SCALE ANALYSIS]</scope>
    <source>
        <tissue>Cervix carcinoma</tissue>
    </source>
</reference>
<reference key="26">
    <citation type="journal article" date="2010" name="Sci. Signal.">
        <title>Quantitative phosphoproteomics reveals widespread full phosphorylation site occupancy during mitosis.</title>
        <authorList>
            <person name="Olsen J.V."/>
            <person name="Vermeulen M."/>
            <person name="Santamaria A."/>
            <person name="Kumar C."/>
            <person name="Miller M.L."/>
            <person name="Jensen L.J."/>
            <person name="Gnad F."/>
            <person name="Cox J."/>
            <person name="Jensen T.S."/>
            <person name="Nigg E.A."/>
            <person name="Brunak S."/>
            <person name="Mann M."/>
        </authorList>
    </citation>
    <scope>PHOSPHORYLATION [LARGE SCALE ANALYSIS] AT SER-304</scope>
    <scope>IDENTIFICATION BY MASS SPECTROMETRY [LARGE SCALE ANALYSIS]</scope>
    <source>
        <tissue>Cervix carcinoma</tissue>
    </source>
</reference>
<reference key="27">
    <citation type="journal article" date="2011" name="BMC Syst. Biol.">
        <title>Initial characterization of the human central proteome.</title>
        <authorList>
            <person name="Burkard T.R."/>
            <person name="Planyavsky M."/>
            <person name="Kaupe I."/>
            <person name="Breitwieser F.P."/>
            <person name="Buerckstuemmer T."/>
            <person name="Bennett K.L."/>
            <person name="Superti-Furga G."/>
            <person name="Colinge J."/>
        </authorList>
    </citation>
    <scope>IDENTIFICATION BY MASS SPECTROMETRY [LARGE SCALE ANALYSIS]</scope>
</reference>
<reference key="28">
    <citation type="journal article" date="2011" name="J. Clin. Invest.">
        <title>T cell protein tyrosine phosphatase attenuates T cell signaling to maintain tolerance in mice.</title>
        <authorList>
            <person name="Wiede F."/>
            <person name="Shields B.J."/>
            <person name="Chew S.H."/>
            <person name="Kyparissoudis K."/>
            <person name="van Vliet C."/>
            <person name="Galic S."/>
            <person name="Tremblay M.L."/>
            <person name="Russell S.M."/>
            <person name="Godfrey D.I."/>
            <person name="Tiganis T."/>
        </authorList>
    </citation>
    <scope>FUNCTION IN DEPHOSPHORYLATION OF LCK AND FYN</scope>
</reference>
<reference key="29">
    <citation type="journal article" date="2011" name="Sci. Signal.">
        <title>System-wide temporal characterization of the proteome and phosphoproteome of human embryonic stem cell differentiation.</title>
        <authorList>
            <person name="Rigbolt K.T."/>
            <person name="Prokhorova T.A."/>
            <person name="Akimov V."/>
            <person name="Henningsen J."/>
            <person name="Johansen P.T."/>
            <person name="Kratchmarova I."/>
            <person name="Kassem M."/>
            <person name="Mann M."/>
            <person name="Olsen J.V."/>
            <person name="Blagoev B."/>
        </authorList>
    </citation>
    <scope>PHOSPHORYLATION [LARGE SCALE ANALYSIS] AT SER-304</scope>
    <scope>IDENTIFICATION BY MASS SPECTROMETRY [LARGE SCALE ANALYSIS]</scope>
</reference>
<reference key="30">
    <citation type="journal article" date="2012" name="Biochim. Biophys. Acta">
        <title>Tyrosine phosphorylation of a SNARE protein, Syntaxin 17: Implications for membrane trafficking in the early secretory pathway.</title>
        <authorList>
            <person name="Muppirala M."/>
            <person name="Gupta V."/>
            <person name="Swarup G."/>
        </authorList>
    </citation>
    <scope>INTERACTION WITH STX17</scope>
    <scope>SUBCELLULAR LOCATION</scope>
</reference>
<reference key="31">
    <citation type="journal article" date="2013" name="J. Proteome Res.">
        <title>Toward a comprehensive characterization of a human cancer cell phosphoproteome.</title>
        <authorList>
            <person name="Zhou H."/>
            <person name="Di Palma S."/>
            <person name="Preisinger C."/>
            <person name="Peng M."/>
            <person name="Polat A.N."/>
            <person name="Heck A.J."/>
            <person name="Mohammed S."/>
        </authorList>
    </citation>
    <scope>PHOSPHORYLATION [LARGE SCALE ANALYSIS] AT SER-293; SER-298 AND SER-304</scope>
    <scope>IDENTIFICATION BY MASS SPECTROMETRY [LARGE SCALE ANALYSIS]</scope>
    <source>
        <tissue>Cervix carcinoma</tissue>
        <tissue>Erythroleukemia</tissue>
    </source>
</reference>
<reference key="32">
    <citation type="journal article" date="2014" name="J. Proteomics">
        <title>An enzyme assisted RP-RPLC approach for in-depth analysis of human liver phosphoproteome.</title>
        <authorList>
            <person name="Bian Y."/>
            <person name="Song C."/>
            <person name="Cheng K."/>
            <person name="Dong M."/>
            <person name="Wang F."/>
            <person name="Huang J."/>
            <person name="Sun D."/>
            <person name="Wang L."/>
            <person name="Ye M."/>
            <person name="Zou H."/>
        </authorList>
    </citation>
    <scope>PHOSPHORYLATION [LARGE SCALE ANALYSIS] AT SER-298 AND SER-304</scope>
    <scope>IDENTIFICATION BY MASS SPECTROMETRY [LARGE SCALE ANALYSIS]</scope>
    <source>
        <tissue>Liver</tissue>
    </source>
</reference>
<reference key="33">
    <citation type="journal article" date="2002" name="J. Biol. Chem.">
        <title>Structure determination of T cell protein-tyrosine phosphatase.</title>
        <authorList>
            <person name="Iversen L.F."/>
            <person name="Moller K.B."/>
            <person name="Pedersen A.K."/>
            <person name="Peters G.H."/>
            <person name="Petersen A.S."/>
            <person name="Andersen H.S."/>
            <person name="Branner S."/>
            <person name="Mortensen S.B."/>
            <person name="Moller N.P."/>
        </authorList>
    </citation>
    <scope>X-RAY CRYSTALLOGRAPHY (2.56 ANGSTROMS) OF 1-314</scope>
    <scope>BIOPHYSICOCHEMICAL PROPERTIES</scope>
</reference>
<accession>P17706</accession>
<accession>A8K955</accession>
<accession>A8MXU3</accession>
<accession>K7ENG3</accession>
<accession>Q96AU5</accession>
<accession>Q96HR2</accession>
<dbReference type="EC" id="3.1.3.48"/>
<dbReference type="EMBL" id="M25393">
    <property type="protein sequence ID" value="AAA65997.1"/>
    <property type="molecule type" value="mRNA"/>
</dbReference>
<dbReference type="EMBL" id="AK292570">
    <property type="protein sequence ID" value="BAF85259.1"/>
    <property type="molecule type" value="mRNA"/>
</dbReference>
<dbReference type="EMBL" id="EF445017">
    <property type="protein sequence ID" value="ACA06062.1"/>
    <property type="molecule type" value="Genomic_DNA"/>
</dbReference>
<dbReference type="EMBL" id="EF445017">
    <property type="protein sequence ID" value="ACA06064.1"/>
    <property type="molecule type" value="Genomic_DNA"/>
</dbReference>
<dbReference type="EMBL" id="AP001077">
    <property type="status" value="NOT_ANNOTATED_CDS"/>
    <property type="molecule type" value="Genomic_DNA"/>
</dbReference>
<dbReference type="EMBL" id="AP002449">
    <property type="status" value="NOT_ANNOTATED_CDS"/>
    <property type="molecule type" value="Genomic_DNA"/>
</dbReference>
<dbReference type="EMBL" id="AP005482">
    <property type="status" value="NOT_ANNOTATED_CDS"/>
    <property type="molecule type" value="Genomic_DNA"/>
</dbReference>
<dbReference type="EMBL" id="CH471113">
    <property type="protein sequence ID" value="EAX01532.1"/>
    <property type="molecule type" value="Genomic_DNA"/>
</dbReference>
<dbReference type="EMBL" id="CH471113">
    <property type="protein sequence ID" value="EAX01539.1"/>
    <property type="molecule type" value="Genomic_DNA"/>
</dbReference>
<dbReference type="EMBL" id="BC008244">
    <property type="protein sequence ID" value="AAH08244.1"/>
    <property type="molecule type" value="mRNA"/>
</dbReference>
<dbReference type="EMBL" id="BC016727">
    <property type="protein sequence ID" value="AAH16727.1"/>
    <property type="molecule type" value="mRNA"/>
</dbReference>
<dbReference type="EMBL" id="M81478">
    <property type="status" value="NOT_ANNOTATED_CDS"/>
    <property type="molecule type" value="mRNA"/>
</dbReference>
<dbReference type="CCDS" id="CCDS11863.1">
    <molecule id="P17706-2"/>
</dbReference>
<dbReference type="CCDS" id="CCDS11864.1">
    <molecule id="P17706-3"/>
</dbReference>
<dbReference type="CCDS" id="CCDS11865.1">
    <molecule id="P17706-1"/>
</dbReference>
<dbReference type="CCDS" id="CCDS59306.1">
    <molecule id="P17706-4"/>
</dbReference>
<dbReference type="PIR" id="A33899">
    <property type="entry name" value="A33899"/>
</dbReference>
<dbReference type="RefSeq" id="NP_001193942.1">
    <molecule id="P17706-4"/>
    <property type="nucleotide sequence ID" value="NM_001207013.2"/>
</dbReference>
<dbReference type="RefSeq" id="NP_002819.2">
    <molecule id="P17706-1"/>
    <property type="nucleotide sequence ID" value="NM_002828.4"/>
</dbReference>
<dbReference type="RefSeq" id="NP_536347.1">
    <molecule id="P17706-2"/>
    <property type="nucleotide sequence ID" value="NM_080422.3"/>
</dbReference>
<dbReference type="RefSeq" id="NP_536348.1">
    <molecule id="P17706-3"/>
    <property type="nucleotide sequence ID" value="NM_080423.3"/>
</dbReference>
<dbReference type="PDB" id="1L8K">
    <property type="method" value="X-ray"/>
    <property type="resolution" value="2.56 A"/>
    <property type="chains" value="A=1-314"/>
</dbReference>
<dbReference type="PDB" id="6ZZ4">
    <property type="method" value="X-ray"/>
    <property type="resolution" value="2.43 A"/>
    <property type="chains" value="A/B=1-314"/>
</dbReference>
<dbReference type="PDB" id="7F5N">
    <property type="method" value="X-ray"/>
    <property type="resolution" value="1.93 A"/>
    <property type="chains" value="A/B/C=1-314"/>
</dbReference>
<dbReference type="PDB" id="7F5O">
    <property type="method" value="X-ray"/>
    <property type="resolution" value="1.70 A"/>
    <property type="chains" value="A/B/C=1-302"/>
</dbReference>
<dbReference type="PDB" id="7UAD">
    <property type="method" value="X-ray"/>
    <property type="resolution" value="2.04 A"/>
    <property type="chains" value="A=1-314"/>
</dbReference>
<dbReference type="PDB" id="8U0H">
    <property type="method" value="X-ray"/>
    <property type="resolution" value="1.93 A"/>
    <property type="chains" value="A/B=1-314"/>
</dbReference>
<dbReference type="PDB" id="8UH6">
    <property type="method" value="EM"/>
    <property type="resolution" value="3.30 A"/>
    <property type="chains" value="C=1-314"/>
</dbReference>
<dbReference type="PDB" id="9C54">
    <property type="method" value="X-ray"/>
    <property type="resolution" value="2.05 A"/>
    <property type="chains" value="A=1-314"/>
</dbReference>
<dbReference type="PDB" id="9C55">
    <property type="method" value="X-ray"/>
    <property type="resolution" value="2.36 A"/>
    <property type="chains" value="A=1-314"/>
</dbReference>
<dbReference type="PDB" id="9C56">
    <property type="method" value="X-ray"/>
    <property type="resolution" value="2.43 A"/>
    <property type="chains" value="A=1-314"/>
</dbReference>
<dbReference type="PDBsum" id="1L8K"/>
<dbReference type="PDBsum" id="6ZZ4"/>
<dbReference type="PDBsum" id="7F5N"/>
<dbReference type="PDBsum" id="7F5O"/>
<dbReference type="PDBsum" id="7UAD"/>
<dbReference type="PDBsum" id="8U0H"/>
<dbReference type="PDBsum" id="8UH6"/>
<dbReference type="PDBsum" id="9C54"/>
<dbReference type="PDBsum" id="9C55"/>
<dbReference type="PDBsum" id="9C56"/>
<dbReference type="EMDB" id="EMD-42247"/>
<dbReference type="SMR" id="P17706"/>
<dbReference type="BioGRID" id="111737">
    <property type="interactions" value="205"/>
</dbReference>
<dbReference type="CORUM" id="P17706"/>
<dbReference type="FunCoup" id="P17706">
    <property type="interactions" value="4629"/>
</dbReference>
<dbReference type="IntAct" id="P17706">
    <property type="interactions" value="71"/>
</dbReference>
<dbReference type="MINT" id="P17706"/>
<dbReference type="STRING" id="9606.ENSP00000311857"/>
<dbReference type="BindingDB" id="P17706"/>
<dbReference type="ChEMBL" id="CHEMBL3807"/>
<dbReference type="GuidetoPHARMACOLOGY" id="3255"/>
<dbReference type="TCDB" id="8.A.128.1.13">
    <property type="family name" value="the signaling adaptor protein karap/dap12/tyrobp (sap) family"/>
</dbReference>
<dbReference type="DEPOD" id="PTPN2"/>
<dbReference type="GlyCosmos" id="P17706">
    <property type="glycosylation" value="1 site, 1 glycan"/>
</dbReference>
<dbReference type="GlyGen" id="P17706">
    <property type="glycosylation" value="3 sites, 1 O-linked glycan (3 sites)"/>
</dbReference>
<dbReference type="iPTMnet" id="P17706"/>
<dbReference type="MetOSite" id="P17706"/>
<dbReference type="PhosphoSitePlus" id="P17706"/>
<dbReference type="BioMuta" id="PTPN2"/>
<dbReference type="DMDM" id="229462762"/>
<dbReference type="jPOST" id="P17706"/>
<dbReference type="MassIVE" id="P17706"/>
<dbReference type="PaxDb" id="9606-ENSP00000311857"/>
<dbReference type="PeptideAtlas" id="P17706"/>
<dbReference type="ProteomicsDB" id="53507">
    <molecule id="P17706-1"/>
</dbReference>
<dbReference type="ProteomicsDB" id="53508">
    <molecule id="P17706-2"/>
</dbReference>
<dbReference type="ProteomicsDB" id="53509">
    <molecule id="P17706-3"/>
</dbReference>
<dbReference type="Pumba" id="P17706"/>
<dbReference type="Antibodypedia" id="6936">
    <property type="antibodies" value="308 antibodies from 34 providers"/>
</dbReference>
<dbReference type="CPTC" id="P17706">
    <property type="antibodies" value="1 antibody"/>
</dbReference>
<dbReference type="DNASU" id="5771"/>
<dbReference type="Ensembl" id="ENST00000309660.10">
    <molecule id="P17706-1"/>
    <property type="protein sequence ID" value="ENSP00000311857.3"/>
    <property type="gene ID" value="ENSG00000175354.20"/>
</dbReference>
<dbReference type="Ensembl" id="ENST00000327283.7">
    <molecule id="P17706-2"/>
    <property type="protein sequence ID" value="ENSP00000320298.3"/>
    <property type="gene ID" value="ENSG00000175354.20"/>
</dbReference>
<dbReference type="Ensembl" id="ENST00000353319.8">
    <molecule id="P17706-3"/>
    <property type="protein sequence ID" value="ENSP00000320546.3"/>
    <property type="gene ID" value="ENSG00000175354.20"/>
</dbReference>
<dbReference type="Ensembl" id="ENST00000591115.5">
    <molecule id="P17706-4"/>
    <property type="protein sequence ID" value="ENSP00000466936.1"/>
    <property type="gene ID" value="ENSG00000175354.20"/>
</dbReference>
<dbReference type="GeneID" id="5771"/>
<dbReference type="KEGG" id="hsa:5771"/>
<dbReference type="MANE-Select" id="ENST00000309660.10">
    <property type="protein sequence ID" value="ENSP00000311857.3"/>
    <property type="RefSeq nucleotide sequence ID" value="NM_002828.4"/>
    <property type="RefSeq protein sequence ID" value="NP_002819.2"/>
</dbReference>
<dbReference type="UCSC" id="uc002krl.4">
    <molecule id="P17706-1"/>
    <property type="organism name" value="human"/>
</dbReference>
<dbReference type="AGR" id="HGNC:9650"/>
<dbReference type="CTD" id="5771"/>
<dbReference type="DisGeNET" id="5771"/>
<dbReference type="GeneCards" id="PTPN2"/>
<dbReference type="HGNC" id="HGNC:9650">
    <property type="gene designation" value="PTPN2"/>
</dbReference>
<dbReference type="HPA" id="ENSG00000175354">
    <property type="expression patterns" value="Tissue enhanced (lymphoid)"/>
</dbReference>
<dbReference type="MalaCards" id="PTPN2"/>
<dbReference type="MIM" id="176887">
    <property type="type" value="gene"/>
</dbReference>
<dbReference type="neXtProt" id="NX_P17706"/>
<dbReference type="OpenTargets" id="ENSG00000175354"/>
<dbReference type="Orphanet" id="85410">
    <property type="disease" value="Oligoarticular juvenile idiopathic arthritis"/>
</dbReference>
<dbReference type="Orphanet" id="85408">
    <property type="disease" value="Rheumatoid factor-negative polyarticular juvenile idiopathic arthritis"/>
</dbReference>
<dbReference type="PharmGKB" id="PA33993"/>
<dbReference type="VEuPathDB" id="HostDB:ENSG00000175354"/>
<dbReference type="eggNOG" id="KOG0789">
    <property type="taxonomic scope" value="Eukaryota"/>
</dbReference>
<dbReference type="GeneTree" id="ENSGT00940000154686"/>
<dbReference type="HOGENOM" id="CLU_001645_9_0_1"/>
<dbReference type="InParanoid" id="P17706"/>
<dbReference type="OMA" id="WKPIVIK"/>
<dbReference type="OrthoDB" id="9450131at2759"/>
<dbReference type="PAN-GO" id="P17706">
    <property type="GO annotations" value="7 GO annotations based on evolutionary models"/>
</dbReference>
<dbReference type="PhylomeDB" id="P17706"/>
<dbReference type="TreeFam" id="TF315897"/>
<dbReference type="BRENDA" id="3.1.3.48">
    <property type="organism ID" value="2681"/>
</dbReference>
<dbReference type="PathwayCommons" id="P17706"/>
<dbReference type="Reactome" id="R-HSA-6807004">
    <property type="pathway name" value="Negative regulation of MET activity"/>
</dbReference>
<dbReference type="Reactome" id="R-HSA-877312">
    <molecule id="P17706-2"/>
    <property type="pathway name" value="Regulation of IFNG signaling"/>
</dbReference>
<dbReference type="Reactome" id="R-HSA-9008059">
    <property type="pathway name" value="Interleukin-37 signaling"/>
</dbReference>
<dbReference type="Reactome" id="R-HSA-9833482">
    <property type="pathway name" value="PKR-mediated signaling"/>
</dbReference>
<dbReference type="SABIO-RK" id="P17706"/>
<dbReference type="SignaLink" id="P17706"/>
<dbReference type="SIGNOR" id="P17706"/>
<dbReference type="BioGRID-ORCS" id="5771">
    <property type="hits" value="29 hits in 1179 CRISPR screens"/>
</dbReference>
<dbReference type="ChiTaRS" id="PTPN2">
    <property type="organism name" value="human"/>
</dbReference>
<dbReference type="EvolutionaryTrace" id="P17706"/>
<dbReference type="GeneWiki" id="PTPN2"/>
<dbReference type="GenomeRNAi" id="5771"/>
<dbReference type="Pharos" id="P17706">
    <property type="development level" value="Tchem"/>
</dbReference>
<dbReference type="PRO" id="PR:P17706"/>
<dbReference type="Proteomes" id="UP000005640">
    <property type="component" value="Chromosome 18"/>
</dbReference>
<dbReference type="RNAct" id="P17706">
    <property type="molecule type" value="protein"/>
</dbReference>
<dbReference type="Bgee" id="ENSG00000175354">
    <property type="expression patterns" value="Expressed in tendon of biceps brachii and 207 other cell types or tissues"/>
</dbReference>
<dbReference type="ExpressionAtlas" id="P17706">
    <property type="expression patterns" value="baseline and differential"/>
</dbReference>
<dbReference type="GO" id="GO:0005737">
    <property type="term" value="C:cytoplasm"/>
    <property type="evidence" value="ECO:0000318"/>
    <property type="project" value="GO_Central"/>
</dbReference>
<dbReference type="GO" id="GO:0005829">
    <property type="term" value="C:cytosol"/>
    <property type="evidence" value="ECO:0000314"/>
    <property type="project" value="HPA"/>
</dbReference>
<dbReference type="GO" id="GO:0005783">
    <property type="term" value="C:endoplasmic reticulum"/>
    <property type="evidence" value="ECO:0000314"/>
    <property type="project" value="UniProtKB"/>
</dbReference>
<dbReference type="GO" id="GO:0005793">
    <property type="term" value="C:endoplasmic reticulum-Golgi intermediate compartment"/>
    <property type="evidence" value="ECO:0000314"/>
    <property type="project" value="UniProtKB"/>
</dbReference>
<dbReference type="GO" id="GO:0031904">
    <property type="term" value="C:endosome lumen"/>
    <property type="evidence" value="ECO:0007669"/>
    <property type="project" value="Ensembl"/>
</dbReference>
<dbReference type="GO" id="GO:0005654">
    <property type="term" value="C:nucleoplasm"/>
    <property type="evidence" value="ECO:0000314"/>
    <property type="project" value="HPA"/>
</dbReference>
<dbReference type="GO" id="GO:0005634">
    <property type="term" value="C:nucleus"/>
    <property type="evidence" value="ECO:0000314"/>
    <property type="project" value="UniProtKB"/>
</dbReference>
<dbReference type="GO" id="GO:0005886">
    <property type="term" value="C:plasma membrane"/>
    <property type="evidence" value="ECO:0007669"/>
    <property type="project" value="UniProtKB-SubCell"/>
</dbReference>
<dbReference type="GO" id="GO:0005178">
    <property type="term" value="F:integrin binding"/>
    <property type="evidence" value="ECO:0000353"/>
    <property type="project" value="UniProtKB"/>
</dbReference>
<dbReference type="GO" id="GO:0004726">
    <property type="term" value="F:non-membrane spanning protein tyrosine phosphatase activity"/>
    <property type="evidence" value="ECO:0000318"/>
    <property type="project" value="GO_Central"/>
</dbReference>
<dbReference type="GO" id="GO:0019901">
    <property type="term" value="F:protein kinase binding"/>
    <property type="evidence" value="ECO:0000353"/>
    <property type="project" value="UniProtKB"/>
</dbReference>
<dbReference type="GO" id="GO:0004725">
    <property type="term" value="F:protein tyrosine phosphatase activity"/>
    <property type="evidence" value="ECO:0000314"/>
    <property type="project" value="UniProtKB"/>
</dbReference>
<dbReference type="GO" id="GO:0030971">
    <property type="term" value="F:receptor tyrosine kinase binding"/>
    <property type="evidence" value="ECO:0000353"/>
    <property type="project" value="UniProtKB"/>
</dbReference>
<dbReference type="GO" id="GO:0097677">
    <property type="term" value="F:STAT family protein binding"/>
    <property type="evidence" value="ECO:0007669"/>
    <property type="project" value="Ensembl"/>
</dbReference>
<dbReference type="GO" id="GO:0019905">
    <property type="term" value="F:syntaxin binding"/>
    <property type="evidence" value="ECO:0000353"/>
    <property type="project" value="UniProtKB"/>
</dbReference>
<dbReference type="GO" id="GO:0030183">
    <property type="term" value="P:B cell differentiation"/>
    <property type="evidence" value="ECO:0000250"/>
    <property type="project" value="UniProtKB"/>
</dbReference>
<dbReference type="GO" id="GO:0030218">
    <property type="term" value="P:erythrocyte differentiation"/>
    <property type="evidence" value="ECO:0000250"/>
    <property type="project" value="UniProtKB"/>
</dbReference>
<dbReference type="GO" id="GO:0042593">
    <property type="term" value="P:glucose homeostasis"/>
    <property type="evidence" value="ECO:0000250"/>
    <property type="project" value="UniProtKB"/>
</dbReference>
<dbReference type="GO" id="GO:0038020">
    <property type="term" value="P:insulin receptor recycling"/>
    <property type="evidence" value="ECO:0007669"/>
    <property type="project" value="Ensembl"/>
</dbReference>
<dbReference type="GO" id="GO:0008286">
    <property type="term" value="P:insulin receptor signaling pathway"/>
    <property type="evidence" value="ECO:0000250"/>
    <property type="project" value="UniProtKB"/>
</dbReference>
<dbReference type="GO" id="GO:0008285">
    <property type="term" value="P:negative regulation of cell population proliferation"/>
    <property type="evidence" value="ECO:0000315"/>
    <property type="project" value="UniProtKB"/>
</dbReference>
<dbReference type="GO" id="GO:0050922">
    <property type="term" value="P:negative regulation of chemotaxis"/>
    <property type="evidence" value="ECO:0000250"/>
    <property type="project" value="UniProtKB"/>
</dbReference>
<dbReference type="GO" id="GO:0042059">
    <property type="term" value="P:negative regulation of epidermal growth factor receptor signaling pathway"/>
    <property type="evidence" value="ECO:0000315"/>
    <property type="project" value="UniProtKB"/>
</dbReference>
<dbReference type="GO" id="GO:0070373">
    <property type="term" value="P:negative regulation of ERK1 and ERK2 cascade"/>
    <property type="evidence" value="ECO:0000250"/>
    <property type="project" value="UniProtKB"/>
</dbReference>
<dbReference type="GO" id="GO:0050728">
    <property type="term" value="P:negative regulation of inflammatory response"/>
    <property type="evidence" value="ECO:0000250"/>
    <property type="project" value="UniProtKB"/>
</dbReference>
<dbReference type="GO" id="GO:0046627">
    <property type="term" value="P:negative regulation of insulin receptor signaling pathway"/>
    <property type="evidence" value="ECO:0000250"/>
    <property type="project" value="UniProtKB"/>
</dbReference>
<dbReference type="GO" id="GO:1902206">
    <property type="term" value="P:negative regulation of interleukin-2-mediated signaling pathway"/>
    <property type="evidence" value="ECO:0000315"/>
    <property type="project" value="UniProtKB"/>
</dbReference>
<dbReference type="GO" id="GO:1902215">
    <property type="term" value="P:negative regulation of interleukin-4-mediated signaling pathway"/>
    <property type="evidence" value="ECO:0000315"/>
    <property type="project" value="UniProtKB"/>
</dbReference>
<dbReference type="GO" id="GO:0070104">
    <property type="term" value="P:negative regulation of interleukin-6-mediated signaling pathway"/>
    <property type="evidence" value="ECO:0000315"/>
    <property type="project" value="UniProtKB"/>
</dbReference>
<dbReference type="GO" id="GO:0010888">
    <property type="term" value="P:negative regulation of lipid storage"/>
    <property type="evidence" value="ECO:0000250"/>
    <property type="project" value="UniProtKB"/>
</dbReference>
<dbReference type="GO" id="GO:1902227">
    <property type="term" value="P:negative regulation of macrophage colony-stimulating factor signaling pathway"/>
    <property type="evidence" value="ECO:0000250"/>
    <property type="project" value="UniProtKB"/>
</dbReference>
<dbReference type="GO" id="GO:0045650">
    <property type="term" value="P:negative regulation of macrophage differentiation"/>
    <property type="evidence" value="ECO:0000250"/>
    <property type="project" value="UniProtKB"/>
</dbReference>
<dbReference type="GO" id="GO:2000587">
    <property type="term" value="P:negative regulation of platelet-derived growth factor receptor-beta signaling pathway"/>
    <property type="evidence" value="ECO:0000250"/>
    <property type="project" value="UniProtKB"/>
</dbReference>
<dbReference type="GO" id="GO:1902233">
    <property type="term" value="P:negative regulation of positive thymic T cell selection"/>
    <property type="evidence" value="ECO:0000250"/>
    <property type="project" value="UniProtKB"/>
</dbReference>
<dbReference type="GO" id="GO:0046426">
    <property type="term" value="P:negative regulation of receptor signaling pathway via JAK-STAT"/>
    <property type="evidence" value="ECO:0000318"/>
    <property type="project" value="GO_Central"/>
</dbReference>
<dbReference type="GO" id="GO:0050860">
    <property type="term" value="P:negative regulation of T cell receptor signaling pathway"/>
    <property type="evidence" value="ECO:0000250"/>
    <property type="project" value="UniProtKB"/>
</dbReference>
<dbReference type="GO" id="GO:0000122">
    <property type="term" value="P:negative regulation of transcription by RNA polymerase II"/>
    <property type="evidence" value="ECO:0007669"/>
    <property type="project" value="Ensembl"/>
</dbReference>
<dbReference type="GO" id="GO:0010804">
    <property type="term" value="P:negative regulation of tumor necrosis factor-mediated signaling pathway"/>
    <property type="evidence" value="ECO:0000250"/>
    <property type="project" value="UniProtKB"/>
</dbReference>
<dbReference type="GO" id="GO:0060339">
    <property type="term" value="P:negative regulation of type I interferon-mediated signaling pathway"/>
    <property type="evidence" value="ECO:0000315"/>
    <property type="project" value="UniProtKB"/>
</dbReference>
<dbReference type="GO" id="GO:0060336">
    <property type="term" value="P:negative regulation of type II interferon-mediated signaling pathway"/>
    <property type="evidence" value="ECO:0000315"/>
    <property type="project" value="UniProtKB"/>
</dbReference>
<dbReference type="GO" id="GO:0042532">
    <property type="term" value="P:negative regulation of tyrosine phosphorylation of STAT protein"/>
    <property type="evidence" value="ECO:0000314"/>
    <property type="project" value="UniProtKB"/>
</dbReference>
<dbReference type="GO" id="GO:0035335">
    <property type="term" value="P:peptidyl-tyrosine dephosphorylation"/>
    <property type="evidence" value="ECO:0000315"/>
    <property type="project" value="UniProtKB"/>
</dbReference>
<dbReference type="GO" id="GO:1902237">
    <property type="term" value="P:positive regulation of endoplasmic reticulum stress-induced intrinsic apoptotic signaling pathway"/>
    <property type="evidence" value="ECO:0007669"/>
    <property type="project" value="Ensembl"/>
</dbReference>
<dbReference type="GO" id="GO:0045722">
    <property type="term" value="P:positive regulation of gluconeogenesis"/>
    <property type="evidence" value="ECO:0000250"/>
    <property type="project" value="UniProtKB"/>
</dbReference>
<dbReference type="GO" id="GO:1903899">
    <property type="term" value="P:positive regulation of PERK-mediated unfolded protein response"/>
    <property type="evidence" value="ECO:0007669"/>
    <property type="project" value="Ensembl"/>
</dbReference>
<dbReference type="GO" id="GO:1902202">
    <property type="term" value="P:regulation of hepatocyte growth factor receptor signaling pathway"/>
    <property type="evidence" value="ECO:0000315"/>
    <property type="project" value="UniProtKB"/>
</dbReference>
<dbReference type="GO" id="GO:0060334">
    <property type="term" value="P:regulation of type II interferon-mediated signaling pathway"/>
    <property type="evidence" value="ECO:0000304"/>
    <property type="project" value="Reactome"/>
</dbReference>
<dbReference type="GO" id="GO:0030217">
    <property type="term" value="P:T cell differentiation"/>
    <property type="evidence" value="ECO:0000250"/>
    <property type="project" value="UniProtKB"/>
</dbReference>
<dbReference type="CDD" id="cd14607">
    <property type="entry name" value="PTPc-N2"/>
    <property type="match status" value="1"/>
</dbReference>
<dbReference type="FunFam" id="3.90.190.10:FF:000025">
    <property type="entry name" value="Tyrosine-protein phosphatase non-receptor type 1"/>
    <property type="match status" value="1"/>
</dbReference>
<dbReference type="Gene3D" id="3.90.190.10">
    <property type="entry name" value="Protein tyrosine phosphatase superfamily"/>
    <property type="match status" value="1"/>
</dbReference>
<dbReference type="InterPro" id="IPR051985">
    <property type="entry name" value="NR_tyrosine_phosphatase"/>
</dbReference>
<dbReference type="InterPro" id="IPR029021">
    <property type="entry name" value="Prot-tyrosine_phosphatase-like"/>
</dbReference>
<dbReference type="InterPro" id="IPR000242">
    <property type="entry name" value="PTP_cat"/>
</dbReference>
<dbReference type="InterPro" id="IPR012265">
    <property type="entry name" value="Ptpn1/Ptpn2"/>
</dbReference>
<dbReference type="InterPro" id="IPR016130">
    <property type="entry name" value="Tyr_Pase_AS"/>
</dbReference>
<dbReference type="InterPro" id="IPR003595">
    <property type="entry name" value="Tyr_Pase_cat"/>
</dbReference>
<dbReference type="InterPro" id="IPR000387">
    <property type="entry name" value="Tyr_Pase_dom"/>
</dbReference>
<dbReference type="PANTHER" id="PTHR46047:SF1">
    <property type="entry name" value="TYROSINE-PROTEIN PHOSPHATASE NON-RECEPTOR TYPE 2"/>
    <property type="match status" value="1"/>
</dbReference>
<dbReference type="PANTHER" id="PTHR46047">
    <property type="entry name" value="TYROSINE-PROTEIN PHOSPHATASE NON-RECEPTOR TYPE 61F"/>
    <property type="match status" value="1"/>
</dbReference>
<dbReference type="Pfam" id="PF00102">
    <property type="entry name" value="Y_phosphatase"/>
    <property type="match status" value="1"/>
</dbReference>
<dbReference type="PIRSF" id="PIRSF000926">
    <property type="entry name" value="Tyr-Ptase_nr1"/>
    <property type="match status" value="1"/>
</dbReference>
<dbReference type="PRINTS" id="PR00700">
    <property type="entry name" value="PRTYPHPHTASE"/>
</dbReference>
<dbReference type="SMART" id="SM00194">
    <property type="entry name" value="PTPc"/>
    <property type="match status" value="1"/>
</dbReference>
<dbReference type="SMART" id="SM00404">
    <property type="entry name" value="PTPc_motif"/>
    <property type="match status" value="1"/>
</dbReference>
<dbReference type="SUPFAM" id="SSF52799">
    <property type="entry name" value="(Phosphotyrosine protein) phosphatases II"/>
    <property type="match status" value="1"/>
</dbReference>
<dbReference type="PROSITE" id="PS00383">
    <property type="entry name" value="TYR_PHOSPHATASE_1"/>
    <property type="match status" value="1"/>
</dbReference>
<dbReference type="PROSITE" id="PS50056">
    <property type="entry name" value="TYR_PHOSPHATASE_2"/>
    <property type="match status" value="1"/>
</dbReference>
<dbReference type="PROSITE" id="PS50055">
    <property type="entry name" value="TYR_PHOSPHATASE_PTP"/>
    <property type="match status" value="1"/>
</dbReference>
<sequence>MPTTIEREFEELDTQRRWQPLYLEIRNESHDYPHRVAKFPENRNRNRYRDVSPYDHSRVKLQNAENDYINASLVDIEEAQRSYILTQGPLPNTCCHFWLMVWQQKTKAVVMLNRIVEKESVKCAQYWPTDDQEMLFKETGFSVKLLSEDVKSYYTVHLLQLENINSGETRTISHFHYTTWPDFGVPESPASFLNFLFKVRESGSLNPDHGPAVIHCSAGIGRSGTFSLVDTCLVLMEKGDDINIKQVLLNMRKYRMGLIQTPDQLRFSYMAIIEGAKCIKGDSSIQKRWKELSKEDLSPAFDHSPNKIMTEKYNGNRIGLEEEKLTGDRCTGLSSKMQDTMEENSESALRKRIREDRKATTAQKVQQMKQRLNENERKRKRWLYWQPILTKMGFMSVILVGAFVGWTLFFQQNAL</sequence>